<gene>
    <name evidence="1" type="primary">rlmE</name>
    <name evidence="1" type="synonym">ftsJ</name>
    <name evidence="1" type="synonym">rrmJ</name>
    <name type="ordered locus">VCM66_0594</name>
</gene>
<keyword id="KW-0963">Cytoplasm</keyword>
<keyword id="KW-0489">Methyltransferase</keyword>
<keyword id="KW-0698">rRNA processing</keyword>
<keyword id="KW-0949">S-adenosyl-L-methionine</keyword>
<keyword id="KW-0808">Transferase</keyword>
<name>RLME_VIBCM</name>
<feature type="chain" id="PRO_1000185304" description="Ribosomal RNA large subunit methyltransferase E">
    <location>
        <begin position="1"/>
        <end position="209"/>
    </location>
</feature>
<feature type="active site" description="Proton acceptor" evidence="1">
    <location>
        <position position="164"/>
    </location>
</feature>
<feature type="binding site" evidence="1">
    <location>
        <position position="63"/>
    </location>
    <ligand>
        <name>S-adenosyl-L-methionine</name>
        <dbReference type="ChEBI" id="CHEBI:59789"/>
    </ligand>
</feature>
<feature type="binding site" evidence="1">
    <location>
        <position position="65"/>
    </location>
    <ligand>
        <name>S-adenosyl-L-methionine</name>
        <dbReference type="ChEBI" id="CHEBI:59789"/>
    </ligand>
</feature>
<feature type="binding site" evidence="1">
    <location>
        <position position="83"/>
    </location>
    <ligand>
        <name>S-adenosyl-L-methionine</name>
        <dbReference type="ChEBI" id="CHEBI:59789"/>
    </ligand>
</feature>
<feature type="binding site" evidence="1">
    <location>
        <position position="99"/>
    </location>
    <ligand>
        <name>S-adenosyl-L-methionine</name>
        <dbReference type="ChEBI" id="CHEBI:59789"/>
    </ligand>
</feature>
<feature type="binding site" evidence="1">
    <location>
        <position position="124"/>
    </location>
    <ligand>
        <name>S-adenosyl-L-methionine</name>
        <dbReference type="ChEBI" id="CHEBI:59789"/>
    </ligand>
</feature>
<dbReference type="EC" id="2.1.1.166" evidence="1"/>
<dbReference type="EMBL" id="CP001233">
    <property type="protein sequence ID" value="ACP04917.1"/>
    <property type="molecule type" value="Genomic_DNA"/>
</dbReference>
<dbReference type="RefSeq" id="WP_000043220.1">
    <property type="nucleotide sequence ID" value="NC_012578.1"/>
</dbReference>
<dbReference type="SMR" id="C3LSP1"/>
<dbReference type="GeneID" id="89515213"/>
<dbReference type="KEGG" id="vcm:VCM66_0594"/>
<dbReference type="HOGENOM" id="CLU_009422_4_0_6"/>
<dbReference type="Proteomes" id="UP000001217">
    <property type="component" value="Chromosome I"/>
</dbReference>
<dbReference type="GO" id="GO:0005737">
    <property type="term" value="C:cytoplasm"/>
    <property type="evidence" value="ECO:0007669"/>
    <property type="project" value="UniProtKB-SubCell"/>
</dbReference>
<dbReference type="GO" id="GO:0008650">
    <property type="term" value="F:rRNA (uridine-2'-O-)-methyltransferase activity"/>
    <property type="evidence" value="ECO:0007669"/>
    <property type="project" value="UniProtKB-UniRule"/>
</dbReference>
<dbReference type="CDD" id="cd02440">
    <property type="entry name" value="AdoMet_MTases"/>
    <property type="match status" value="1"/>
</dbReference>
<dbReference type="FunFam" id="3.40.50.150:FF:000005">
    <property type="entry name" value="Ribosomal RNA large subunit methyltransferase E"/>
    <property type="match status" value="1"/>
</dbReference>
<dbReference type="Gene3D" id="3.40.50.150">
    <property type="entry name" value="Vaccinia Virus protein VP39"/>
    <property type="match status" value="1"/>
</dbReference>
<dbReference type="HAMAP" id="MF_01547">
    <property type="entry name" value="RNA_methyltr_E"/>
    <property type="match status" value="1"/>
</dbReference>
<dbReference type="InterPro" id="IPR050082">
    <property type="entry name" value="RNA_methyltr_RlmE"/>
</dbReference>
<dbReference type="InterPro" id="IPR002877">
    <property type="entry name" value="RNA_MeTrfase_FtsJ_dom"/>
</dbReference>
<dbReference type="InterPro" id="IPR015507">
    <property type="entry name" value="rRNA-MeTfrase_E"/>
</dbReference>
<dbReference type="InterPro" id="IPR029063">
    <property type="entry name" value="SAM-dependent_MTases_sf"/>
</dbReference>
<dbReference type="NCBIfam" id="NF008390">
    <property type="entry name" value="PRK11188.1"/>
    <property type="match status" value="1"/>
</dbReference>
<dbReference type="PANTHER" id="PTHR10920">
    <property type="entry name" value="RIBOSOMAL RNA METHYLTRANSFERASE"/>
    <property type="match status" value="1"/>
</dbReference>
<dbReference type="PANTHER" id="PTHR10920:SF18">
    <property type="entry name" value="RRNA METHYLTRANSFERASE 2, MITOCHONDRIAL"/>
    <property type="match status" value="1"/>
</dbReference>
<dbReference type="Pfam" id="PF01728">
    <property type="entry name" value="FtsJ"/>
    <property type="match status" value="1"/>
</dbReference>
<dbReference type="PIRSF" id="PIRSF005461">
    <property type="entry name" value="23S_rRNA_mtase"/>
    <property type="match status" value="1"/>
</dbReference>
<dbReference type="SUPFAM" id="SSF53335">
    <property type="entry name" value="S-adenosyl-L-methionine-dependent methyltransferases"/>
    <property type="match status" value="1"/>
</dbReference>
<accession>C3LSP1</accession>
<sequence length="209" mass="23197">MSKQKHSASSTRWLKEHFDDKYVNEAKKKGYRSRAIFKIEEIQNKDKLLKAGMTVVDLGAAPGGWSQFAAKVVGEGGRVIACDLLPMESIAGVSFLQGDFREEAVLNALLDRIQPDMVDVVMSDMAPNMAGNLSVDQPRAMYLVELALDMCRQVLAPNGSFVVKVFQGEGFDDYVKAVRDLFKVVKIRKPDSSRSRSREVFIVATGYKG</sequence>
<comment type="function">
    <text evidence="1">Specifically methylates the uridine in position 2552 of 23S rRNA at the 2'-O position of the ribose in the fully assembled 50S ribosomal subunit.</text>
</comment>
<comment type="catalytic activity">
    <reaction evidence="1">
        <text>uridine(2552) in 23S rRNA + S-adenosyl-L-methionine = 2'-O-methyluridine(2552) in 23S rRNA + S-adenosyl-L-homocysteine + H(+)</text>
        <dbReference type="Rhea" id="RHEA:42720"/>
        <dbReference type="Rhea" id="RHEA-COMP:10202"/>
        <dbReference type="Rhea" id="RHEA-COMP:10203"/>
        <dbReference type="ChEBI" id="CHEBI:15378"/>
        <dbReference type="ChEBI" id="CHEBI:57856"/>
        <dbReference type="ChEBI" id="CHEBI:59789"/>
        <dbReference type="ChEBI" id="CHEBI:65315"/>
        <dbReference type="ChEBI" id="CHEBI:74478"/>
        <dbReference type="EC" id="2.1.1.166"/>
    </reaction>
</comment>
<comment type="subcellular location">
    <subcellularLocation>
        <location evidence="1">Cytoplasm</location>
    </subcellularLocation>
</comment>
<comment type="similarity">
    <text evidence="1">Belongs to the class I-like SAM-binding methyltransferase superfamily. RNA methyltransferase RlmE family.</text>
</comment>
<evidence type="ECO:0000255" key="1">
    <source>
        <dbReference type="HAMAP-Rule" id="MF_01547"/>
    </source>
</evidence>
<reference key="1">
    <citation type="journal article" date="2008" name="PLoS ONE">
        <title>A recalibrated molecular clock and independent origins for the cholera pandemic clones.</title>
        <authorList>
            <person name="Feng L."/>
            <person name="Reeves P.R."/>
            <person name="Lan R."/>
            <person name="Ren Y."/>
            <person name="Gao C."/>
            <person name="Zhou Z."/>
            <person name="Ren Y."/>
            <person name="Cheng J."/>
            <person name="Wang W."/>
            <person name="Wang J."/>
            <person name="Qian W."/>
            <person name="Li D."/>
            <person name="Wang L."/>
        </authorList>
    </citation>
    <scope>NUCLEOTIDE SEQUENCE [LARGE SCALE GENOMIC DNA]</scope>
    <source>
        <strain>M66-2</strain>
    </source>
</reference>
<organism>
    <name type="scientific">Vibrio cholerae serotype O1 (strain M66-2)</name>
    <dbReference type="NCBI Taxonomy" id="579112"/>
    <lineage>
        <taxon>Bacteria</taxon>
        <taxon>Pseudomonadati</taxon>
        <taxon>Pseudomonadota</taxon>
        <taxon>Gammaproteobacteria</taxon>
        <taxon>Vibrionales</taxon>
        <taxon>Vibrionaceae</taxon>
        <taxon>Vibrio</taxon>
    </lineage>
</organism>
<proteinExistence type="inferred from homology"/>
<protein>
    <recommendedName>
        <fullName evidence="1">Ribosomal RNA large subunit methyltransferase E</fullName>
        <ecNumber evidence="1">2.1.1.166</ecNumber>
    </recommendedName>
    <alternativeName>
        <fullName evidence="1">23S rRNA Um2552 methyltransferase</fullName>
    </alternativeName>
    <alternativeName>
        <fullName evidence="1">rRNA (uridine-2'-O-)-methyltransferase</fullName>
    </alternativeName>
</protein>